<protein>
    <recommendedName>
        <fullName evidence="1">Small ribosomal subunit protein uS17</fullName>
    </recommendedName>
    <alternativeName>
        <fullName evidence="2">30S ribosomal protein S17</fullName>
    </alternativeName>
</protein>
<keyword id="KW-1185">Reference proteome</keyword>
<keyword id="KW-0687">Ribonucleoprotein</keyword>
<keyword id="KW-0689">Ribosomal protein</keyword>
<keyword id="KW-0694">RNA-binding</keyword>
<keyword id="KW-0699">rRNA-binding</keyword>
<dbReference type="EMBL" id="BX950229">
    <property type="protein sequence ID" value="CAF30964.1"/>
    <property type="molecule type" value="Genomic_DNA"/>
</dbReference>
<dbReference type="RefSeq" id="WP_011171352.1">
    <property type="nucleotide sequence ID" value="NC_005791.1"/>
</dbReference>
<dbReference type="SMR" id="Q6LXE4"/>
<dbReference type="STRING" id="267377.MMP1408"/>
<dbReference type="EnsemblBacteria" id="CAF30964">
    <property type="protein sequence ID" value="CAF30964"/>
    <property type="gene ID" value="MMP1408"/>
</dbReference>
<dbReference type="KEGG" id="mmp:MMP1408"/>
<dbReference type="PATRIC" id="fig|267377.15.peg.1444"/>
<dbReference type="eggNOG" id="arCOG04096">
    <property type="taxonomic scope" value="Archaea"/>
</dbReference>
<dbReference type="HOGENOM" id="CLU_073626_0_3_2"/>
<dbReference type="OrthoDB" id="10698at2157"/>
<dbReference type="Proteomes" id="UP000000590">
    <property type="component" value="Chromosome"/>
</dbReference>
<dbReference type="GO" id="GO:0022627">
    <property type="term" value="C:cytosolic small ribosomal subunit"/>
    <property type="evidence" value="ECO:0007669"/>
    <property type="project" value="TreeGrafter"/>
</dbReference>
<dbReference type="GO" id="GO:0019843">
    <property type="term" value="F:rRNA binding"/>
    <property type="evidence" value="ECO:0007669"/>
    <property type="project" value="UniProtKB-UniRule"/>
</dbReference>
<dbReference type="GO" id="GO:0003735">
    <property type="term" value="F:structural constituent of ribosome"/>
    <property type="evidence" value="ECO:0007669"/>
    <property type="project" value="InterPro"/>
</dbReference>
<dbReference type="GO" id="GO:0006412">
    <property type="term" value="P:translation"/>
    <property type="evidence" value="ECO:0007669"/>
    <property type="project" value="UniProtKB-UniRule"/>
</dbReference>
<dbReference type="CDD" id="cd00364">
    <property type="entry name" value="Ribosomal_uS17"/>
    <property type="match status" value="1"/>
</dbReference>
<dbReference type="FunFam" id="2.40.50.1000:FF:000005">
    <property type="entry name" value="30S ribosomal protein S17"/>
    <property type="match status" value="1"/>
</dbReference>
<dbReference type="Gene3D" id="2.40.50.1000">
    <property type="match status" value="1"/>
</dbReference>
<dbReference type="HAMAP" id="MF_01345_A">
    <property type="entry name" value="Ribosomal_uS17_A"/>
    <property type="match status" value="1"/>
</dbReference>
<dbReference type="InterPro" id="IPR012340">
    <property type="entry name" value="NA-bd_OB-fold"/>
</dbReference>
<dbReference type="InterPro" id="IPR000266">
    <property type="entry name" value="Ribosomal_uS17"/>
</dbReference>
<dbReference type="InterPro" id="IPR028333">
    <property type="entry name" value="Ribosomal_uS17_arc/euk"/>
</dbReference>
<dbReference type="InterPro" id="IPR019978">
    <property type="entry name" value="Ribosomal_uS17_archaeal"/>
</dbReference>
<dbReference type="InterPro" id="IPR019979">
    <property type="entry name" value="Ribosomal_uS17_CS"/>
</dbReference>
<dbReference type="NCBIfam" id="NF006345">
    <property type="entry name" value="PRK08572.1"/>
    <property type="match status" value="1"/>
</dbReference>
<dbReference type="NCBIfam" id="TIGR03630">
    <property type="entry name" value="uS17_arch"/>
    <property type="match status" value="1"/>
</dbReference>
<dbReference type="PANTHER" id="PTHR10744">
    <property type="entry name" value="40S RIBOSOMAL PROTEIN S11 FAMILY MEMBER"/>
    <property type="match status" value="1"/>
</dbReference>
<dbReference type="PANTHER" id="PTHR10744:SF9">
    <property type="entry name" value="40S RIBOSOMAL PROTEIN S11-RELATED"/>
    <property type="match status" value="1"/>
</dbReference>
<dbReference type="Pfam" id="PF00366">
    <property type="entry name" value="Ribosomal_S17"/>
    <property type="match status" value="1"/>
</dbReference>
<dbReference type="PRINTS" id="PR00973">
    <property type="entry name" value="RIBOSOMALS17"/>
</dbReference>
<dbReference type="SUPFAM" id="SSF50249">
    <property type="entry name" value="Nucleic acid-binding proteins"/>
    <property type="match status" value="1"/>
</dbReference>
<dbReference type="PROSITE" id="PS00056">
    <property type="entry name" value="RIBOSOMAL_S17"/>
    <property type="match status" value="1"/>
</dbReference>
<comment type="function">
    <text evidence="1">One of the primary rRNA binding proteins, it binds specifically to the 5'-end of 16S ribosomal RNA.</text>
</comment>
<comment type="subunit">
    <text evidence="1">Part of the 30S ribosomal subunit.</text>
</comment>
<comment type="similarity">
    <text evidence="1">Belongs to the universal ribosomal protein uS17 family.</text>
</comment>
<name>RS17_METMP</name>
<gene>
    <name evidence="1" type="primary">rps17</name>
    <name type="synonym">rpsQ</name>
    <name type="ordered locus">MMP1408</name>
</gene>
<proteinExistence type="inferred from homology"/>
<reference key="1">
    <citation type="journal article" date="2004" name="J. Bacteriol.">
        <title>Complete genome sequence of the genetically tractable hydrogenotrophic methanogen Methanococcus maripaludis.</title>
        <authorList>
            <person name="Hendrickson E.L."/>
            <person name="Kaul R."/>
            <person name="Zhou Y."/>
            <person name="Bovee D."/>
            <person name="Chapman P."/>
            <person name="Chung J."/>
            <person name="Conway de Macario E."/>
            <person name="Dodsworth J.A."/>
            <person name="Gillett W."/>
            <person name="Graham D.E."/>
            <person name="Hackett M."/>
            <person name="Haydock A.K."/>
            <person name="Kang A."/>
            <person name="Land M.L."/>
            <person name="Levy R."/>
            <person name="Lie T.J."/>
            <person name="Major T.A."/>
            <person name="Moore B.C."/>
            <person name="Porat I."/>
            <person name="Palmeiri A."/>
            <person name="Rouse G."/>
            <person name="Saenphimmachak C."/>
            <person name="Soell D."/>
            <person name="Van Dien S."/>
            <person name="Wang T."/>
            <person name="Whitman W.B."/>
            <person name="Xia Q."/>
            <person name="Zhang Y."/>
            <person name="Larimer F.W."/>
            <person name="Olson M.V."/>
            <person name="Leigh J.A."/>
        </authorList>
    </citation>
    <scope>NUCLEOTIDE SEQUENCE [LARGE SCALE GENOMIC DNA]</scope>
    <source>
        <strain>DSM 14266 / JCM 13030 / NBRC 101832 / S2 / LL</strain>
    </source>
</reference>
<sequence>MSNIGIDVKAPENVCEDPNCPFHGTLSVRGQIFEGIVTSDKGHDTIVIKREVTGYISKYERYEKRTTSLVAHNPACIKAKVGDTVKVMECRPISKTKSFVVIEKTENLE</sequence>
<organism>
    <name type="scientific">Methanococcus maripaludis (strain DSM 14266 / JCM 13030 / NBRC 101832 / S2 / LL)</name>
    <dbReference type="NCBI Taxonomy" id="267377"/>
    <lineage>
        <taxon>Archaea</taxon>
        <taxon>Methanobacteriati</taxon>
        <taxon>Methanobacteriota</taxon>
        <taxon>Methanomada group</taxon>
        <taxon>Methanococci</taxon>
        <taxon>Methanococcales</taxon>
        <taxon>Methanococcaceae</taxon>
        <taxon>Methanococcus</taxon>
    </lineage>
</organism>
<feature type="chain" id="PRO_0000232607" description="Small ribosomal subunit protein uS17">
    <location>
        <begin position="1"/>
        <end position="109"/>
    </location>
</feature>
<accession>Q6LXE4</accession>
<evidence type="ECO:0000255" key="1">
    <source>
        <dbReference type="HAMAP-Rule" id="MF_01345"/>
    </source>
</evidence>
<evidence type="ECO:0000305" key="2"/>